<feature type="chain" id="PRO_0000081223" description="Transcriptional regulatory protein RstA">
    <location>
        <begin position="1"/>
        <end position="239"/>
    </location>
</feature>
<feature type="domain" description="Response regulatory" evidence="1">
    <location>
        <begin position="3"/>
        <end position="116"/>
    </location>
</feature>
<feature type="DNA-binding region" description="OmpR/PhoB-type" evidence="2">
    <location>
        <begin position="136"/>
        <end position="235"/>
    </location>
</feature>
<feature type="modified residue" description="4-aspartylphosphate" evidence="1">
    <location>
        <position position="52"/>
    </location>
</feature>
<dbReference type="EMBL" id="U41101">
    <property type="protein sequence ID" value="AAA82081.1"/>
    <property type="status" value="ALT_INIT"/>
    <property type="molecule type" value="Genomic_DNA"/>
</dbReference>
<dbReference type="EMBL" id="U00096">
    <property type="protein sequence ID" value="AAC74680.2"/>
    <property type="molecule type" value="Genomic_DNA"/>
</dbReference>
<dbReference type="EMBL" id="AP009048">
    <property type="protein sequence ID" value="BAA15346.1"/>
    <property type="status" value="ALT_INIT"/>
    <property type="molecule type" value="Genomic_DNA"/>
</dbReference>
<dbReference type="PIR" id="B64917">
    <property type="entry name" value="B64917"/>
</dbReference>
<dbReference type="RefSeq" id="NP_416125.2">
    <property type="nucleotide sequence ID" value="NC_000913.3"/>
</dbReference>
<dbReference type="RefSeq" id="WP_001092508.1">
    <property type="nucleotide sequence ID" value="NZ_STEB01000003.1"/>
</dbReference>
<dbReference type="SMR" id="P52108"/>
<dbReference type="BioGRID" id="4261763">
    <property type="interactions" value="158"/>
</dbReference>
<dbReference type="DIP" id="DIP-10807N"/>
<dbReference type="FunCoup" id="P52108">
    <property type="interactions" value="271"/>
</dbReference>
<dbReference type="IntAct" id="P52108">
    <property type="interactions" value="12"/>
</dbReference>
<dbReference type="STRING" id="511145.b1608"/>
<dbReference type="jPOST" id="P52108"/>
<dbReference type="PaxDb" id="511145-b1608"/>
<dbReference type="EnsemblBacteria" id="AAC74680">
    <property type="protein sequence ID" value="AAC74680"/>
    <property type="gene ID" value="b1608"/>
</dbReference>
<dbReference type="GeneID" id="93775756"/>
<dbReference type="GeneID" id="946199"/>
<dbReference type="KEGG" id="ecj:JW1600"/>
<dbReference type="KEGG" id="eco:b1608"/>
<dbReference type="KEGG" id="ecoc:C3026_09255"/>
<dbReference type="PATRIC" id="fig|1411691.4.peg.654"/>
<dbReference type="EchoBASE" id="EB2982"/>
<dbReference type="eggNOG" id="COG0745">
    <property type="taxonomic scope" value="Bacteria"/>
</dbReference>
<dbReference type="HOGENOM" id="CLU_000445_30_4_6"/>
<dbReference type="InParanoid" id="P52108"/>
<dbReference type="OMA" id="QIISEVW"/>
<dbReference type="OrthoDB" id="9802426at2"/>
<dbReference type="PhylomeDB" id="P52108"/>
<dbReference type="BioCyc" id="EcoCyc:RSTA-MONOMER"/>
<dbReference type="PRO" id="PR:P52108"/>
<dbReference type="Proteomes" id="UP000000625">
    <property type="component" value="Chromosome"/>
</dbReference>
<dbReference type="GO" id="GO:0005829">
    <property type="term" value="C:cytosol"/>
    <property type="evidence" value="ECO:0000318"/>
    <property type="project" value="GO_Central"/>
</dbReference>
<dbReference type="GO" id="GO:0032993">
    <property type="term" value="C:protein-DNA complex"/>
    <property type="evidence" value="ECO:0000318"/>
    <property type="project" value="GO_Central"/>
</dbReference>
<dbReference type="GO" id="GO:0000156">
    <property type="term" value="F:phosphorelay response regulator activity"/>
    <property type="evidence" value="ECO:0000318"/>
    <property type="project" value="GO_Central"/>
</dbReference>
<dbReference type="GO" id="GO:0000976">
    <property type="term" value="F:transcription cis-regulatory region binding"/>
    <property type="evidence" value="ECO:0000318"/>
    <property type="project" value="GO_Central"/>
</dbReference>
<dbReference type="GO" id="GO:0006355">
    <property type="term" value="P:regulation of DNA-templated transcription"/>
    <property type="evidence" value="ECO:0000318"/>
    <property type="project" value="GO_Central"/>
</dbReference>
<dbReference type="CDD" id="cd00383">
    <property type="entry name" value="trans_reg_C"/>
    <property type="match status" value="1"/>
</dbReference>
<dbReference type="FunFam" id="1.10.10.10:FF:000099">
    <property type="entry name" value="Two-component system response regulator TorR"/>
    <property type="match status" value="1"/>
</dbReference>
<dbReference type="Gene3D" id="3.40.50.2300">
    <property type="match status" value="1"/>
</dbReference>
<dbReference type="Gene3D" id="1.10.10.10">
    <property type="entry name" value="Winged helix-like DNA-binding domain superfamily/Winged helix DNA-binding domain"/>
    <property type="match status" value="1"/>
</dbReference>
<dbReference type="InterPro" id="IPR011006">
    <property type="entry name" value="CheY-like_superfamily"/>
</dbReference>
<dbReference type="InterPro" id="IPR001867">
    <property type="entry name" value="OmpR/PhoB-type_DNA-bd"/>
</dbReference>
<dbReference type="InterPro" id="IPR016032">
    <property type="entry name" value="Sig_transdc_resp-reg_C-effctor"/>
</dbReference>
<dbReference type="InterPro" id="IPR001789">
    <property type="entry name" value="Sig_transdc_resp-reg_receiver"/>
</dbReference>
<dbReference type="InterPro" id="IPR039420">
    <property type="entry name" value="WalR-like"/>
</dbReference>
<dbReference type="InterPro" id="IPR036388">
    <property type="entry name" value="WH-like_DNA-bd_sf"/>
</dbReference>
<dbReference type="NCBIfam" id="NF007977">
    <property type="entry name" value="PRK10701.1"/>
    <property type="match status" value="1"/>
</dbReference>
<dbReference type="PANTHER" id="PTHR48111">
    <property type="entry name" value="REGULATOR OF RPOS"/>
    <property type="match status" value="1"/>
</dbReference>
<dbReference type="PANTHER" id="PTHR48111:SF47">
    <property type="entry name" value="TRANSCRIPTIONAL REGULATORY PROTEIN RSTA"/>
    <property type="match status" value="1"/>
</dbReference>
<dbReference type="Pfam" id="PF00072">
    <property type="entry name" value="Response_reg"/>
    <property type="match status" value="1"/>
</dbReference>
<dbReference type="Pfam" id="PF00486">
    <property type="entry name" value="Trans_reg_C"/>
    <property type="match status" value="1"/>
</dbReference>
<dbReference type="SMART" id="SM00448">
    <property type="entry name" value="REC"/>
    <property type="match status" value="1"/>
</dbReference>
<dbReference type="SMART" id="SM00862">
    <property type="entry name" value="Trans_reg_C"/>
    <property type="match status" value="1"/>
</dbReference>
<dbReference type="SUPFAM" id="SSF46894">
    <property type="entry name" value="C-terminal effector domain of the bipartite response regulators"/>
    <property type="match status" value="1"/>
</dbReference>
<dbReference type="SUPFAM" id="SSF52172">
    <property type="entry name" value="CheY-like"/>
    <property type="match status" value="1"/>
</dbReference>
<dbReference type="PROSITE" id="PS51755">
    <property type="entry name" value="OMPR_PHOB"/>
    <property type="match status" value="1"/>
</dbReference>
<dbReference type="PROSITE" id="PS50110">
    <property type="entry name" value="RESPONSE_REGULATORY"/>
    <property type="match status" value="1"/>
</dbReference>
<accession>P52108</accession>
<evidence type="ECO:0000255" key="1">
    <source>
        <dbReference type="PROSITE-ProRule" id="PRU00169"/>
    </source>
</evidence>
<evidence type="ECO:0000255" key="2">
    <source>
        <dbReference type="PROSITE-ProRule" id="PRU01091"/>
    </source>
</evidence>
<evidence type="ECO:0000269" key="3">
    <source>
    </source>
</evidence>
<evidence type="ECO:0000269" key="4">
    <source>
    </source>
</evidence>
<evidence type="ECO:0000305" key="5"/>
<sequence>MNTIVFVEDDAEVGSLIAAYLAKHDMQVTVEPRGDQAEETILRENPDLVLLDIMLPGKDGMTICRDLRAKWSGPIVLLTSLDSDMNHILALEMGACDYILKTTPPAVLLARLRLHLRQNEQATLTKGLQETSLTPYKALHFGTLTIDPINRVVTLANTEISLSTADFELLWELATHAGQIMDRDALLKNLRGVSYDGLDRSVDVAISRLRKKLLDNAAEPYRIKTVRNKGYLFAPHAWE</sequence>
<organism>
    <name type="scientific">Escherichia coli (strain K12)</name>
    <dbReference type="NCBI Taxonomy" id="83333"/>
    <lineage>
        <taxon>Bacteria</taxon>
        <taxon>Pseudomonadati</taxon>
        <taxon>Pseudomonadota</taxon>
        <taxon>Gammaproteobacteria</taxon>
        <taxon>Enterobacterales</taxon>
        <taxon>Enterobacteriaceae</taxon>
        <taxon>Escherichia</taxon>
    </lineage>
</organism>
<keyword id="KW-0963">Cytoplasm</keyword>
<keyword id="KW-0238">DNA-binding</keyword>
<keyword id="KW-0597">Phosphoprotein</keyword>
<keyword id="KW-1185">Reference proteome</keyword>
<keyword id="KW-0804">Transcription</keyword>
<keyword id="KW-0805">Transcription regulation</keyword>
<keyword id="KW-0902">Two-component regulatory system</keyword>
<proteinExistence type="evidence at protein level"/>
<reference key="1">
    <citation type="submission" date="1995-11" db="EMBL/GenBank/DDBJ databases">
        <authorList>
            <person name="Kuempel P.L."/>
        </authorList>
    </citation>
    <scope>NUCLEOTIDE SEQUENCE [GENOMIC DNA]</scope>
    <source>
        <strain>K12</strain>
    </source>
</reference>
<reference key="2">
    <citation type="journal article" date="1996" name="DNA Res.">
        <title>A 570-kb DNA sequence of the Escherichia coli K-12 genome corresponding to the 28.0-40.1 min region on the linkage map.</title>
        <authorList>
            <person name="Aiba H."/>
            <person name="Baba T."/>
            <person name="Fujita K."/>
            <person name="Hayashi K."/>
            <person name="Inada T."/>
            <person name="Isono K."/>
            <person name="Itoh T."/>
            <person name="Kasai H."/>
            <person name="Kashimoto K."/>
            <person name="Kimura S."/>
            <person name="Kitakawa M."/>
            <person name="Kitagawa M."/>
            <person name="Makino K."/>
            <person name="Miki T."/>
            <person name="Mizobuchi K."/>
            <person name="Mori H."/>
            <person name="Mori T."/>
            <person name="Motomura K."/>
            <person name="Nakade S."/>
            <person name="Nakamura Y."/>
            <person name="Nashimoto H."/>
            <person name="Nishio Y."/>
            <person name="Oshima T."/>
            <person name="Saito N."/>
            <person name="Sampei G."/>
            <person name="Seki Y."/>
            <person name="Sivasundaram S."/>
            <person name="Tagami H."/>
            <person name="Takeda J."/>
            <person name="Takemoto K."/>
            <person name="Takeuchi Y."/>
            <person name="Wada C."/>
            <person name="Yamamoto Y."/>
            <person name="Horiuchi T."/>
        </authorList>
    </citation>
    <scope>NUCLEOTIDE SEQUENCE [LARGE SCALE GENOMIC DNA]</scope>
    <source>
        <strain>K12 / W3110 / ATCC 27325 / DSM 5911</strain>
    </source>
</reference>
<reference key="3">
    <citation type="journal article" date="1997" name="Science">
        <title>The complete genome sequence of Escherichia coli K-12.</title>
        <authorList>
            <person name="Blattner F.R."/>
            <person name="Plunkett G. III"/>
            <person name="Bloch C.A."/>
            <person name="Perna N.T."/>
            <person name="Burland V."/>
            <person name="Riley M."/>
            <person name="Collado-Vides J."/>
            <person name="Glasner J.D."/>
            <person name="Rode C.K."/>
            <person name="Mayhew G.F."/>
            <person name="Gregor J."/>
            <person name="Davis N.W."/>
            <person name="Kirkpatrick H.A."/>
            <person name="Goeden M.A."/>
            <person name="Rose D.J."/>
            <person name="Mau B."/>
            <person name="Shao Y."/>
        </authorList>
    </citation>
    <scope>NUCLEOTIDE SEQUENCE [LARGE SCALE GENOMIC DNA]</scope>
    <source>
        <strain>K12 / MG1655 / ATCC 47076</strain>
    </source>
</reference>
<reference key="4">
    <citation type="journal article" date="2006" name="Mol. Syst. Biol.">
        <title>Highly accurate genome sequences of Escherichia coli K-12 strains MG1655 and W3110.</title>
        <authorList>
            <person name="Hayashi K."/>
            <person name="Morooka N."/>
            <person name="Yamamoto Y."/>
            <person name="Fujita K."/>
            <person name="Isono K."/>
            <person name="Choi S."/>
            <person name="Ohtsubo E."/>
            <person name="Baba T."/>
            <person name="Wanner B.L."/>
            <person name="Mori H."/>
            <person name="Horiuchi T."/>
        </authorList>
    </citation>
    <scope>NUCLEOTIDE SEQUENCE [LARGE SCALE GENOMIC DNA]</scope>
    <source>
        <strain>K12 / W3110 / ATCC 27325 / DSM 5911</strain>
    </source>
</reference>
<reference key="5">
    <citation type="journal article" date="1992" name="Mol. Microbiol.">
        <title>In vivo characterization of tus gene expression in Escherichia coli.</title>
        <authorList>
            <person name="Roecklein B.A."/>
            <person name="Kuempel P.L."/>
        </authorList>
    </citation>
    <scope>MAPPING</scope>
</reference>
<reference key="6">
    <citation type="journal article" date="2003" name="J. Bacteriol.">
        <title>Identification and molecular characterization of the Mg2+ stimulon of Escherichia coli.</title>
        <authorList>
            <person name="Minagawa S."/>
            <person name="Ogasawara H."/>
            <person name="Kato A."/>
            <person name="Yamamoto K."/>
            <person name="Eguchi Y."/>
            <person name="Oshima T."/>
            <person name="Mori H."/>
            <person name="Ishihama A."/>
            <person name="Utsumi R."/>
        </authorList>
    </citation>
    <scope>INDUCTION</scope>
    <source>
        <strain>K12</strain>
    </source>
</reference>
<reference key="7">
    <citation type="journal article" date="2005" name="J. Biol. Chem.">
        <title>Functional characterization in vitro of all two-component signal transduction systems from Escherichia coli.</title>
        <authorList>
            <person name="Yamamoto K."/>
            <person name="Hirao K."/>
            <person name="Oshima T."/>
            <person name="Aiba H."/>
            <person name="Utsumi R."/>
            <person name="Ishihama A."/>
        </authorList>
    </citation>
    <scope>PHOSPHORYLATION</scope>
    <source>
        <strain>K12 / W3110 / ATCC 27325 / DSM 5911</strain>
    </source>
</reference>
<protein>
    <recommendedName>
        <fullName>Transcriptional regulatory protein RstA</fullName>
    </recommendedName>
</protein>
<comment type="function">
    <text>Member of the two-component regulatory system RstB/RstA.</text>
</comment>
<comment type="interaction">
    <interactant intactId="EBI-558990">
        <id>P52108</id>
    </interactant>
    <interactant intactId="EBI-6403634">
        <id>P21866</id>
        <label>kdpE</label>
    </interactant>
    <organismsDiffer>false</organismsDiffer>
    <experiments>2</experiments>
</comment>
<comment type="subcellular location">
    <subcellularLocation>
        <location evidence="5">Cytoplasm</location>
    </subcellularLocation>
</comment>
<comment type="induction">
    <text evidence="3">Induced by low extracellular levels of magnesium via the PhoQ/PhoP two-component regulatory system.</text>
</comment>
<comment type="PTM">
    <text evidence="4">Phosphorylated by RstB.</text>
</comment>
<comment type="sequence caution" evidence="5">
    <conflict type="erroneous initiation">
        <sequence resource="EMBL-CDS" id="AAA82081"/>
    </conflict>
</comment>
<comment type="sequence caution" evidence="5">
    <conflict type="erroneous initiation">
        <sequence resource="EMBL-CDS" id="BAA15346"/>
    </conflict>
</comment>
<name>RSTA_ECOLI</name>
<gene>
    <name type="primary">rstA</name>
    <name type="synonym">urpT</name>
    <name type="ordered locus">b1608</name>
    <name type="ordered locus">JW1600</name>
</gene>